<reference key="1">
    <citation type="submission" date="2006-08" db="EMBL/GenBank/DDBJ databases">
        <title>Complete sequence of Alkalilimnicola ehrilichei MLHE-1.</title>
        <authorList>
            <person name="Copeland A."/>
            <person name="Lucas S."/>
            <person name="Lapidus A."/>
            <person name="Barry K."/>
            <person name="Detter J.C."/>
            <person name="Glavina del Rio T."/>
            <person name="Hammon N."/>
            <person name="Israni S."/>
            <person name="Dalin E."/>
            <person name="Tice H."/>
            <person name="Pitluck S."/>
            <person name="Sims D."/>
            <person name="Brettin T."/>
            <person name="Bruce D."/>
            <person name="Han C."/>
            <person name="Tapia R."/>
            <person name="Gilna P."/>
            <person name="Schmutz J."/>
            <person name="Larimer F."/>
            <person name="Land M."/>
            <person name="Hauser L."/>
            <person name="Kyrpides N."/>
            <person name="Mikhailova N."/>
            <person name="Oremland R.S."/>
            <person name="Hoeft S.E."/>
            <person name="Switzer-Blum J."/>
            <person name="Kulp T."/>
            <person name="King G."/>
            <person name="Tabita R."/>
            <person name="Witte B."/>
            <person name="Santini J.M."/>
            <person name="Basu P."/>
            <person name="Hollibaugh J.T."/>
            <person name="Xie G."/>
            <person name="Stolz J.F."/>
            <person name="Richardson P."/>
        </authorList>
    </citation>
    <scope>NUCLEOTIDE SEQUENCE [LARGE SCALE GENOMIC DNA]</scope>
    <source>
        <strain>ATCC BAA-1101 / DSM 17681 / MLHE-1</strain>
    </source>
</reference>
<protein>
    <recommendedName>
        <fullName evidence="1">Glucose-1-phosphate adenylyltransferase 2</fullName>
        <ecNumber evidence="1">2.7.7.27</ecNumber>
    </recommendedName>
    <alternativeName>
        <fullName evidence="1">ADP-glucose pyrophosphorylase 2</fullName>
        <shortName evidence="1">ADPGlc PPase 2</shortName>
    </alternativeName>
    <alternativeName>
        <fullName evidence="1">ADP-glucose synthase 2</fullName>
    </alternativeName>
</protein>
<sequence length="422" mass="46869">MSSSPSPRFVSRLTRNTLVLILAGGRGSRLMDLTTWRAKPAVPFGGKFRIIDFTLSNCINSGIRRIGVLTQYKAHSLIRHLRLGWGSLRGDFGEFVEILPAQQRTEGSWYRGTADAVYQSLDIVRMHDPDYVLILAGDHVYKMDYGPMLARHVETGADVTVGCLEVPVEEASAFGVMAVDGDNRVVRFQEKPADPPSIPGQSDRALASMGIYIFNRAFLFNQLIADARKESDHDFGKDIIPSLIDQARVIAFPFRDAATGGQAYWRDVGTIDAFWRTNLELVGVNPQLNLYDKEWPIWTHQEQLPPAKFVFDDDDRRGMAVDSMVSGGCIISGAYLRRSLLFSSVVVEDGSRVEDAVILPEAHIEPGCRIRKAVIDKHCRLAAGTVIGEDPEEDARRFHLSPGGVVLVTPDMLGQEIHNVYT</sequence>
<name>GLGC2_ALKEH</name>
<feature type="chain" id="PRO_0000261857" description="Glucose-1-phosphate adenylyltransferase 2">
    <location>
        <begin position="1"/>
        <end position="422"/>
    </location>
</feature>
<feature type="binding site" evidence="1">
    <location>
        <position position="110"/>
    </location>
    <ligand>
        <name>alpha-D-glucose 1-phosphate</name>
        <dbReference type="ChEBI" id="CHEBI:58601"/>
    </ligand>
</feature>
<feature type="binding site" evidence="1">
    <location>
        <position position="175"/>
    </location>
    <ligand>
        <name>alpha-D-glucose 1-phosphate</name>
        <dbReference type="ChEBI" id="CHEBI:58601"/>
    </ligand>
</feature>
<feature type="binding site" evidence="1">
    <location>
        <begin position="190"/>
        <end position="191"/>
    </location>
    <ligand>
        <name>alpha-D-glucose 1-phosphate</name>
        <dbReference type="ChEBI" id="CHEBI:58601"/>
    </ligand>
</feature>
<feature type="binding site" evidence="1">
    <location>
        <position position="208"/>
    </location>
    <ligand>
        <name>alpha-D-glucose 1-phosphate</name>
        <dbReference type="ChEBI" id="CHEBI:58601"/>
    </ligand>
</feature>
<proteinExistence type="inferred from homology"/>
<organism>
    <name type="scientific">Alkalilimnicola ehrlichii (strain ATCC BAA-1101 / DSM 17681 / MLHE-1)</name>
    <dbReference type="NCBI Taxonomy" id="187272"/>
    <lineage>
        <taxon>Bacteria</taxon>
        <taxon>Pseudomonadati</taxon>
        <taxon>Pseudomonadota</taxon>
        <taxon>Gammaproteobacteria</taxon>
        <taxon>Chromatiales</taxon>
        <taxon>Ectothiorhodospiraceae</taxon>
        <taxon>Alkalilimnicola</taxon>
    </lineage>
</organism>
<accession>Q0AA25</accession>
<evidence type="ECO:0000255" key="1">
    <source>
        <dbReference type="HAMAP-Rule" id="MF_00624"/>
    </source>
</evidence>
<keyword id="KW-0067">ATP-binding</keyword>
<keyword id="KW-0119">Carbohydrate metabolism</keyword>
<keyword id="KW-0320">Glycogen biosynthesis</keyword>
<keyword id="KW-0321">Glycogen metabolism</keyword>
<keyword id="KW-0547">Nucleotide-binding</keyword>
<keyword id="KW-0548">Nucleotidyltransferase</keyword>
<keyword id="KW-1185">Reference proteome</keyword>
<keyword id="KW-0808">Transferase</keyword>
<gene>
    <name evidence="1" type="primary">glgC2</name>
    <name type="ordered locus">Mlg_0959</name>
</gene>
<comment type="function">
    <text evidence="1">Involved in the biosynthesis of ADP-glucose, a building block required for the elongation reactions to produce glycogen. Catalyzes the reaction between ATP and alpha-D-glucose 1-phosphate (G1P) to produce pyrophosphate and ADP-Glc.</text>
</comment>
<comment type="catalytic activity">
    <reaction evidence="1">
        <text>alpha-D-glucose 1-phosphate + ATP + H(+) = ADP-alpha-D-glucose + diphosphate</text>
        <dbReference type="Rhea" id="RHEA:12120"/>
        <dbReference type="ChEBI" id="CHEBI:15378"/>
        <dbReference type="ChEBI" id="CHEBI:30616"/>
        <dbReference type="ChEBI" id="CHEBI:33019"/>
        <dbReference type="ChEBI" id="CHEBI:57498"/>
        <dbReference type="ChEBI" id="CHEBI:58601"/>
        <dbReference type="EC" id="2.7.7.27"/>
    </reaction>
</comment>
<comment type="pathway">
    <text evidence="1">Glycan biosynthesis; glycogen biosynthesis.</text>
</comment>
<comment type="subunit">
    <text evidence="1">Homotetramer.</text>
</comment>
<comment type="similarity">
    <text evidence="1">Belongs to the bacterial/plant glucose-1-phosphate adenylyltransferase family.</text>
</comment>
<dbReference type="EC" id="2.7.7.27" evidence="1"/>
<dbReference type="EMBL" id="CP000453">
    <property type="protein sequence ID" value="ABI56312.1"/>
    <property type="molecule type" value="Genomic_DNA"/>
</dbReference>
<dbReference type="RefSeq" id="WP_011628707.1">
    <property type="nucleotide sequence ID" value="NC_008340.1"/>
</dbReference>
<dbReference type="SMR" id="Q0AA25"/>
<dbReference type="KEGG" id="aeh:Mlg_0959"/>
<dbReference type="eggNOG" id="COG0448">
    <property type="taxonomic scope" value="Bacteria"/>
</dbReference>
<dbReference type="HOGENOM" id="CLU_029499_14_1_6"/>
<dbReference type="OrthoDB" id="9801810at2"/>
<dbReference type="UniPathway" id="UPA00164"/>
<dbReference type="Proteomes" id="UP000001962">
    <property type="component" value="Chromosome"/>
</dbReference>
<dbReference type="GO" id="GO:0005524">
    <property type="term" value="F:ATP binding"/>
    <property type="evidence" value="ECO:0007669"/>
    <property type="project" value="UniProtKB-KW"/>
</dbReference>
<dbReference type="GO" id="GO:0008878">
    <property type="term" value="F:glucose-1-phosphate adenylyltransferase activity"/>
    <property type="evidence" value="ECO:0007669"/>
    <property type="project" value="UniProtKB-UniRule"/>
</dbReference>
<dbReference type="GO" id="GO:0005978">
    <property type="term" value="P:glycogen biosynthetic process"/>
    <property type="evidence" value="ECO:0007669"/>
    <property type="project" value="UniProtKB-UniRule"/>
</dbReference>
<dbReference type="CDD" id="cd02508">
    <property type="entry name" value="ADP_Glucose_PP"/>
    <property type="match status" value="1"/>
</dbReference>
<dbReference type="CDD" id="cd04651">
    <property type="entry name" value="LbH_G1P_AT_C"/>
    <property type="match status" value="1"/>
</dbReference>
<dbReference type="Gene3D" id="2.160.10.10">
    <property type="entry name" value="Hexapeptide repeat proteins"/>
    <property type="match status" value="1"/>
</dbReference>
<dbReference type="Gene3D" id="3.90.550.10">
    <property type="entry name" value="Spore Coat Polysaccharide Biosynthesis Protein SpsA, Chain A"/>
    <property type="match status" value="1"/>
</dbReference>
<dbReference type="HAMAP" id="MF_00624">
    <property type="entry name" value="GlgC"/>
    <property type="match status" value="1"/>
</dbReference>
<dbReference type="InterPro" id="IPR011831">
    <property type="entry name" value="ADP-Glc_PPase"/>
</dbReference>
<dbReference type="InterPro" id="IPR005836">
    <property type="entry name" value="ADP_Glu_pyroP_CS"/>
</dbReference>
<dbReference type="InterPro" id="IPR023049">
    <property type="entry name" value="GlgC_bac"/>
</dbReference>
<dbReference type="InterPro" id="IPR056818">
    <property type="entry name" value="GlmU/GlgC-like_hexapep"/>
</dbReference>
<dbReference type="InterPro" id="IPR005835">
    <property type="entry name" value="NTP_transferase_dom"/>
</dbReference>
<dbReference type="InterPro" id="IPR029044">
    <property type="entry name" value="Nucleotide-diphossugar_trans"/>
</dbReference>
<dbReference type="InterPro" id="IPR011004">
    <property type="entry name" value="Trimer_LpxA-like_sf"/>
</dbReference>
<dbReference type="NCBIfam" id="TIGR02091">
    <property type="entry name" value="glgC"/>
    <property type="match status" value="1"/>
</dbReference>
<dbReference type="NCBIfam" id="NF001947">
    <property type="entry name" value="PRK00725.1"/>
    <property type="match status" value="1"/>
</dbReference>
<dbReference type="NCBIfam" id="NF002023">
    <property type="entry name" value="PRK00844.1"/>
    <property type="match status" value="1"/>
</dbReference>
<dbReference type="PANTHER" id="PTHR43523:SF2">
    <property type="entry name" value="GLUCOSE-1-PHOSPHATE ADENYLYLTRANSFERASE"/>
    <property type="match status" value="1"/>
</dbReference>
<dbReference type="PANTHER" id="PTHR43523">
    <property type="entry name" value="GLUCOSE-1-PHOSPHATE ADENYLYLTRANSFERASE-RELATED"/>
    <property type="match status" value="1"/>
</dbReference>
<dbReference type="Pfam" id="PF24894">
    <property type="entry name" value="Hexapep_GlmU"/>
    <property type="match status" value="1"/>
</dbReference>
<dbReference type="Pfam" id="PF00483">
    <property type="entry name" value="NTP_transferase"/>
    <property type="match status" value="1"/>
</dbReference>
<dbReference type="SUPFAM" id="SSF53448">
    <property type="entry name" value="Nucleotide-diphospho-sugar transferases"/>
    <property type="match status" value="1"/>
</dbReference>
<dbReference type="SUPFAM" id="SSF51161">
    <property type="entry name" value="Trimeric LpxA-like enzymes"/>
    <property type="match status" value="1"/>
</dbReference>
<dbReference type="PROSITE" id="PS00808">
    <property type="entry name" value="ADP_GLC_PYROPHOSPH_1"/>
    <property type="match status" value="1"/>
</dbReference>
<dbReference type="PROSITE" id="PS00809">
    <property type="entry name" value="ADP_GLC_PYROPHOSPH_2"/>
    <property type="match status" value="1"/>
</dbReference>